<evidence type="ECO:0000255" key="1">
    <source>
        <dbReference type="HAMAP-Rule" id="MF_00632"/>
    </source>
</evidence>
<accession>B1XHQ1</accession>
<protein>
    <recommendedName>
        <fullName evidence="1">Nucleotide-binding protein SYNPCC7002_A1983</fullName>
    </recommendedName>
</protein>
<name>Y1983_PICP2</name>
<dbReference type="EMBL" id="CP000951">
    <property type="protein sequence ID" value="ACA99969.1"/>
    <property type="molecule type" value="Genomic_DNA"/>
</dbReference>
<dbReference type="RefSeq" id="WP_012307592.1">
    <property type="nucleotide sequence ID" value="NZ_JAHHPU010000002.1"/>
</dbReference>
<dbReference type="SMR" id="B1XHQ1"/>
<dbReference type="STRING" id="32049.SYNPCC7002_A1983"/>
<dbReference type="KEGG" id="syp:SYNPCC7002_A1983"/>
<dbReference type="eggNOG" id="COG1666">
    <property type="taxonomic scope" value="Bacteria"/>
</dbReference>
<dbReference type="HOGENOM" id="CLU_099839_0_0_3"/>
<dbReference type="Proteomes" id="UP000001688">
    <property type="component" value="Chromosome"/>
</dbReference>
<dbReference type="GO" id="GO:0005829">
    <property type="term" value="C:cytosol"/>
    <property type="evidence" value="ECO:0007669"/>
    <property type="project" value="TreeGrafter"/>
</dbReference>
<dbReference type="GO" id="GO:0000166">
    <property type="term" value="F:nucleotide binding"/>
    <property type="evidence" value="ECO:0007669"/>
    <property type="project" value="TreeGrafter"/>
</dbReference>
<dbReference type="CDD" id="cd11740">
    <property type="entry name" value="YajQ_like"/>
    <property type="match status" value="1"/>
</dbReference>
<dbReference type="Gene3D" id="3.30.70.860">
    <property type="match status" value="1"/>
</dbReference>
<dbReference type="Gene3D" id="3.30.70.990">
    <property type="entry name" value="YajQ-like, domain 2"/>
    <property type="match status" value="1"/>
</dbReference>
<dbReference type="HAMAP" id="MF_00632">
    <property type="entry name" value="YajQ"/>
    <property type="match status" value="1"/>
</dbReference>
<dbReference type="InterPro" id="IPR007551">
    <property type="entry name" value="DUF520"/>
</dbReference>
<dbReference type="InterPro" id="IPR035571">
    <property type="entry name" value="UPF0234-like_C"/>
</dbReference>
<dbReference type="InterPro" id="IPR035570">
    <property type="entry name" value="UPF0234_N"/>
</dbReference>
<dbReference type="InterPro" id="IPR036183">
    <property type="entry name" value="YajQ-like_sf"/>
</dbReference>
<dbReference type="NCBIfam" id="NF003819">
    <property type="entry name" value="PRK05412.1"/>
    <property type="match status" value="1"/>
</dbReference>
<dbReference type="PANTHER" id="PTHR30476">
    <property type="entry name" value="UPF0234 PROTEIN YAJQ"/>
    <property type="match status" value="1"/>
</dbReference>
<dbReference type="PANTHER" id="PTHR30476:SF0">
    <property type="entry name" value="UPF0234 PROTEIN YAJQ"/>
    <property type="match status" value="1"/>
</dbReference>
<dbReference type="Pfam" id="PF04461">
    <property type="entry name" value="DUF520"/>
    <property type="match status" value="1"/>
</dbReference>
<dbReference type="SUPFAM" id="SSF89963">
    <property type="entry name" value="YajQ-like"/>
    <property type="match status" value="2"/>
</dbReference>
<gene>
    <name type="ordered locus">SYNPCC7002_A1983</name>
</gene>
<comment type="function">
    <text evidence="1">Nucleotide-binding protein.</text>
</comment>
<comment type="similarity">
    <text evidence="1">Belongs to the YajQ family.</text>
</comment>
<reference key="1">
    <citation type="submission" date="2008-02" db="EMBL/GenBank/DDBJ databases">
        <title>Complete sequence of Synechococcus sp. PCC 7002.</title>
        <authorList>
            <person name="Li T."/>
            <person name="Zhao J."/>
            <person name="Zhao C."/>
            <person name="Liu Z."/>
            <person name="Zhao F."/>
            <person name="Marquardt J."/>
            <person name="Nomura C.T."/>
            <person name="Persson S."/>
            <person name="Detter J.C."/>
            <person name="Richardson P.M."/>
            <person name="Lanz C."/>
            <person name="Schuster S.C."/>
            <person name="Wang J."/>
            <person name="Li S."/>
            <person name="Huang X."/>
            <person name="Cai T."/>
            <person name="Yu Z."/>
            <person name="Luo J."/>
            <person name="Zhao J."/>
            <person name="Bryant D.A."/>
        </authorList>
    </citation>
    <scope>NUCLEOTIDE SEQUENCE [LARGE SCALE GENOMIC DNA]</scope>
    <source>
        <strain>ATCC 27264 / PCC 7002 / PR-6</strain>
    </source>
</reference>
<organism>
    <name type="scientific">Picosynechococcus sp. (strain ATCC 27264 / PCC 7002 / PR-6)</name>
    <name type="common">Agmenellum quadruplicatum</name>
    <dbReference type="NCBI Taxonomy" id="32049"/>
    <lineage>
        <taxon>Bacteria</taxon>
        <taxon>Bacillati</taxon>
        <taxon>Cyanobacteriota</taxon>
        <taxon>Cyanophyceae</taxon>
        <taxon>Oscillatoriophycideae</taxon>
        <taxon>Chroococcales</taxon>
        <taxon>Geminocystaceae</taxon>
        <taxon>Picosynechococcus</taxon>
    </lineage>
</organism>
<sequence length="163" mass="18243">MASTNSFDVVSDFDRQEVVNTIDQALRDINTRYDLKDTKTTIELGENTITINTASDFTLDAVQTILVTKAVKRNLSPKLFDYGEAESASGGRVRQVITLRQGISKDDAKKITKMVKTDFKKVQASIQGDAVRISSKSKDDLQAVMQAVRDLDFPMPIQFTNYR</sequence>
<feature type="chain" id="PRO_1000130656" description="Nucleotide-binding protein SYNPCC7002_A1983">
    <location>
        <begin position="1"/>
        <end position="163"/>
    </location>
</feature>
<keyword id="KW-0547">Nucleotide-binding</keyword>
<keyword id="KW-1185">Reference proteome</keyword>
<proteinExistence type="inferred from homology"/>